<proteinExistence type="inferred from homology"/>
<feature type="chain" id="PRO_0000369666" description="UPF0738 protein SA0863">
    <location>
        <begin position="1"/>
        <end position="115"/>
    </location>
</feature>
<dbReference type="EMBL" id="BA000018">
    <property type="protein sequence ID" value="BAB42104.1"/>
    <property type="molecule type" value="Genomic_DNA"/>
</dbReference>
<dbReference type="PIR" id="E89868">
    <property type="entry name" value="E89868"/>
</dbReference>
<dbReference type="RefSeq" id="WP_001242103.1">
    <property type="nucleotide sequence ID" value="NC_002745.2"/>
</dbReference>
<dbReference type="EnsemblBacteria" id="BAB42104">
    <property type="protein sequence ID" value="BAB42104"/>
    <property type="gene ID" value="BAB42104"/>
</dbReference>
<dbReference type="KEGG" id="sau:SA0863"/>
<dbReference type="HOGENOM" id="CLU_142282_0_0_9"/>
<dbReference type="HAMAP" id="MF_01861">
    <property type="entry name" value="UPF0738"/>
    <property type="match status" value="1"/>
</dbReference>
<dbReference type="InterPro" id="IPR020908">
    <property type="entry name" value="UPF0738"/>
</dbReference>
<dbReference type="Pfam" id="PF19785">
    <property type="entry name" value="UPF0738"/>
    <property type="match status" value="1"/>
</dbReference>
<sequence>MRLYINEIKIKDDILYCYTEDSIKGLSEVGQMLVDSDNYAFAYTLDDGKAYAYLIFVQETWTMLHENTTKKIIINDELELTEFHQELTYILDNIKGNNNYGKEFVATVEETFDIE</sequence>
<protein>
    <recommendedName>
        <fullName evidence="1">UPF0738 protein SA0863</fullName>
    </recommendedName>
</protein>
<organism>
    <name type="scientific">Staphylococcus aureus (strain N315)</name>
    <dbReference type="NCBI Taxonomy" id="158879"/>
    <lineage>
        <taxon>Bacteria</taxon>
        <taxon>Bacillati</taxon>
        <taxon>Bacillota</taxon>
        <taxon>Bacilli</taxon>
        <taxon>Bacillales</taxon>
        <taxon>Staphylococcaceae</taxon>
        <taxon>Staphylococcus</taxon>
    </lineage>
</organism>
<accession>Q7A6E2</accession>
<reference key="1">
    <citation type="journal article" date="2001" name="Lancet">
        <title>Whole genome sequencing of meticillin-resistant Staphylococcus aureus.</title>
        <authorList>
            <person name="Kuroda M."/>
            <person name="Ohta T."/>
            <person name="Uchiyama I."/>
            <person name="Baba T."/>
            <person name="Yuzawa H."/>
            <person name="Kobayashi I."/>
            <person name="Cui L."/>
            <person name="Oguchi A."/>
            <person name="Aoki K."/>
            <person name="Nagai Y."/>
            <person name="Lian J.-Q."/>
            <person name="Ito T."/>
            <person name="Kanamori M."/>
            <person name="Matsumaru H."/>
            <person name="Maruyama A."/>
            <person name="Murakami H."/>
            <person name="Hosoyama A."/>
            <person name="Mizutani-Ui Y."/>
            <person name="Takahashi N.K."/>
            <person name="Sawano T."/>
            <person name="Inoue R."/>
            <person name="Kaito C."/>
            <person name="Sekimizu K."/>
            <person name="Hirakawa H."/>
            <person name="Kuhara S."/>
            <person name="Goto S."/>
            <person name="Yabuzaki J."/>
            <person name="Kanehisa M."/>
            <person name="Yamashita A."/>
            <person name="Oshima K."/>
            <person name="Furuya K."/>
            <person name="Yoshino C."/>
            <person name="Shiba T."/>
            <person name="Hattori M."/>
            <person name="Ogasawara N."/>
            <person name="Hayashi H."/>
            <person name="Hiramatsu K."/>
        </authorList>
    </citation>
    <scope>NUCLEOTIDE SEQUENCE [LARGE SCALE GENOMIC DNA]</scope>
    <source>
        <strain>N315</strain>
    </source>
</reference>
<gene>
    <name type="ordered locus">SA0863</name>
</gene>
<evidence type="ECO:0000255" key="1">
    <source>
        <dbReference type="HAMAP-Rule" id="MF_01861"/>
    </source>
</evidence>
<name>Y863_STAAN</name>
<comment type="similarity">
    <text evidence="1">Belongs to the UPF0738 family.</text>
</comment>